<evidence type="ECO:0000255" key="1"/>
<evidence type="ECO:0000256" key="2">
    <source>
        <dbReference type="SAM" id="MobiDB-lite"/>
    </source>
</evidence>
<evidence type="ECO:0000269" key="3">
    <source>
    </source>
</evidence>
<evidence type="ECO:0000305" key="4"/>
<keyword id="KW-0469">Meiosis</keyword>
<keyword id="KW-0472">Membrane</keyword>
<keyword id="KW-0496">Mitochondrion</keyword>
<keyword id="KW-1185">Reference proteome</keyword>
<keyword id="KW-0812">Transmembrane</keyword>
<keyword id="KW-1133">Transmembrane helix</keyword>
<reference key="1">
    <citation type="journal article" date="2002" name="Nature">
        <title>The genome sequence of Schizosaccharomyces pombe.</title>
        <authorList>
            <person name="Wood V."/>
            <person name="Gwilliam R."/>
            <person name="Rajandream M.A."/>
            <person name="Lyne M.H."/>
            <person name="Lyne R."/>
            <person name="Stewart A."/>
            <person name="Sgouros J.G."/>
            <person name="Peat N."/>
            <person name="Hayles J."/>
            <person name="Baker S.G."/>
            <person name="Basham D."/>
            <person name="Bowman S."/>
            <person name="Brooks K."/>
            <person name="Brown D."/>
            <person name="Brown S."/>
            <person name="Chillingworth T."/>
            <person name="Churcher C.M."/>
            <person name="Collins M."/>
            <person name="Connor R."/>
            <person name="Cronin A."/>
            <person name="Davis P."/>
            <person name="Feltwell T."/>
            <person name="Fraser A."/>
            <person name="Gentles S."/>
            <person name="Goble A."/>
            <person name="Hamlin N."/>
            <person name="Harris D.E."/>
            <person name="Hidalgo J."/>
            <person name="Hodgson G."/>
            <person name="Holroyd S."/>
            <person name="Hornsby T."/>
            <person name="Howarth S."/>
            <person name="Huckle E.J."/>
            <person name="Hunt S."/>
            <person name="Jagels K."/>
            <person name="James K.D."/>
            <person name="Jones L."/>
            <person name="Jones M."/>
            <person name="Leather S."/>
            <person name="McDonald S."/>
            <person name="McLean J."/>
            <person name="Mooney P."/>
            <person name="Moule S."/>
            <person name="Mungall K.L."/>
            <person name="Murphy L.D."/>
            <person name="Niblett D."/>
            <person name="Odell C."/>
            <person name="Oliver K."/>
            <person name="O'Neil S."/>
            <person name="Pearson D."/>
            <person name="Quail M.A."/>
            <person name="Rabbinowitsch E."/>
            <person name="Rutherford K.M."/>
            <person name="Rutter S."/>
            <person name="Saunders D."/>
            <person name="Seeger K."/>
            <person name="Sharp S."/>
            <person name="Skelton J."/>
            <person name="Simmonds M.N."/>
            <person name="Squares R."/>
            <person name="Squares S."/>
            <person name="Stevens K."/>
            <person name="Taylor K."/>
            <person name="Taylor R.G."/>
            <person name="Tivey A."/>
            <person name="Walsh S.V."/>
            <person name="Warren T."/>
            <person name="Whitehead S."/>
            <person name="Woodward J.R."/>
            <person name="Volckaert G."/>
            <person name="Aert R."/>
            <person name="Robben J."/>
            <person name="Grymonprez B."/>
            <person name="Weltjens I."/>
            <person name="Vanstreels E."/>
            <person name="Rieger M."/>
            <person name="Schaefer M."/>
            <person name="Mueller-Auer S."/>
            <person name="Gabel C."/>
            <person name="Fuchs M."/>
            <person name="Duesterhoeft A."/>
            <person name="Fritzc C."/>
            <person name="Holzer E."/>
            <person name="Moestl D."/>
            <person name="Hilbert H."/>
            <person name="Borzym K."/>
            <person name="Langer I."/>
            <person name="Beck A."/>
            <person name="Lehrach H."/>
            <person name="Reinhardt R."/>
            <person name="Pohl T.M."/>
            <person name="Eger P."/>
            <person name="Zimmermann W."/>
            <person name="Wedler H."/>
            <person name="Wambutt R."/>
            <person name="Purnelle B."/>
            <person name="Goffeau A."/>
            <person name="Cadieu E."/>
            <person name="Dreano S."/>
            <person name="Gloux S."/>
            <person name="Lelaure V."/>
            <person name="Mottier S."/>
            <person name="Galibert F."/>
            <person name="Aves S.J."/>
            <person name="Xiang Z."/>
            <person name="Hunt C."/>
            <person name="Moore K."/>
            <person name="Hurst S.M."/>
            <person name="Lucas M."/>
            <person name="Rochet M."/>
            <person name="Gaillardin C."/>
            <person name="Tallada V.A."/>
            <person name="Garzon A."/>
            <person name="Thode G."/>
            <person name="Daga R.R."/>
            <person name="Cruzado L."/>
            <person name="Jimenez J."/>
            <person name="Sanchez M."/>
            <person name="del Rey F."/>
            <person name="Benito J."/>
            <person name="Dominguez A."/>
            <person name="Revuelta J.L."/>
            <person name="Moreno S."/>
            <person name="Armstrong J."/>
            <person name="Forsburg S.L."/>
            <person name="Cerutti L."/>
            <person name="Lowe T."/>
            <person name="McCombie W.R."/>
            <person name="Paulsen I."/>
            <person name="Potashkin J."/>
            <person name="Shpakovski G.V."/>
            <person name="Ussery D."/>
            <person name="Barrell B.G."/>
            <person name="Nurse P."/>
        </authorList>
    </citation>
    <scope>NUCLEOTIDE SEQUENCE [LARGE SCALE GENOMIC DNA]</scope>
    <source>
        <strain>972 / ATCC 24843</strain>
    </source>
</reference>
<reference key="2">
    <citation type="journal article" date="2005" name="Curr. Biol.">
        <title>A large-scale screen in S. pombe identifies seven novel genes required for critical meiotic events.</title>
        <authorList>
            <person name="Martin-Castellanos C."/>
            <person name="Blanco M."/>
            <person name="Rozalen A.E."/>
            <person name="Perez-Hidalgo L."/>
            <person name="Garcia A.I."/>
            <person name="Conde F."/>
            <person name="Mata J."/>
            <person name="Ellermeier C."/>
            <person name="Davis L."/>
            <person name="San-Segundo P."/>
            <person name="Smith G.R."/>
            <person name="Moreno S."/>
        </authorList>
    </citation>
    <scope>FUNCTION IN MEIOSIS</scope>
</reference>
<reference key="3">
    <citation type="journal article" date="2006" name="Nat. Biotechnol.">
        <title>ORFeome cloning and global analysis of protein localization in the fission yeast Schizosaccharomyces pombe.</title>
        <authorList>
            <person name="Matsuyama A."/>
            <person name="Arai R."/>
            <person name="Yashiroda Y."/>
            <person name="Shirai A."/>
            <person name="Kamata A."/>
            <person name="Sekido S."/>
            <person name="Kobayashi Y."/>
            <person name="Hashimoto A."/>
            <person name="Hamamoto M."/>
            <person name="Hiraoka Y."/>
            <person name="Horinouchi S."/>
            <person name="Yoshida M."/>
        </authorList>
    </citation>
    <scope>SUBCELLULAR LOCATION [LARGE SCALE ANALYSIS]</scope>
</reference>
<sequence length="135" mass="15864">MVSRVESVIVFALYKFLQRYFHSFHCFFLLCFTVMLCVVQQCSSAMTSFRCPTFSLSKYTCVLPASIPEMILFTFSSHTFQTPTKKGNKTKKKRKKEKKKETIVEKNKVLKSFALYKKINNYRSTRCVLVCQCKY</sequence>
<gene>
    <name type="primary">mug116</name>
    <name type="ORF">SPAC5D6.10c</name>
</gene>
<comment type="function">
    <text evidence="3">Has a role in meiosis.</text>
</comment>
<comment type="subcellular location">
    <subcellularLocation>
        <location evidence="4">Mitochondrion membrane</location>
        <topology evidence="4">Single-pass membrane protein</topology>
    </subcellularLocation>
</comment>
<organism>
    <name type="scientific">Schizosaccharomyces pombe (strain 972 / ATCC 24843)</name>
    <name type="common">Fission yeast</name>
    <dbReference type="NCBI Taxonomy" id="284812"/>
    <lineage>
        <taxon>Eukaryota</taxon>
        <taxon>Fungi</taxon>
        <taxon>Dikarya</taxon>
        <taxon>Ascomycota</taxon>
        <taxon>Taphrinomycotina</taxon>
        <taxon>Schizosaccharomycetes</taxon>
        <taxon>Schizosaccharomycetales</taxon>
        <taxon>Schizosaccharomycetaceae</taxon>
        <taxon>Schizosaccharomyces</taxon>
    </lineage>
</organism>
<protein>
    <recommendedName>
        <fullName>Meiotically up-regulated gene 116 protein</fullName>
    </recommendedName>
</protein>
<dbReference type="EMBL" id="CU329670">
    <property type="protein sequence ID" value="CAB10858.1"/>
    <property type="molecule type" value="Genomic_DNA"/>
</dbReference>
<dbReference type="PIR" id="T38956">
    <property type="entry name" value="T38956"/>
</dbReference>
<dbReference type="RefSeq" id="NP_593359.1">
    <property type="nucleotide sequence ID" value="NM_001018791.2"/>
</dbReference>
<dbReference type="PaxDb" id="4896-SPAC5D6.10c.1"/>
<dbReference type="EnsemblFungi" id="SPAC5D6.10c.1">
    <property type="protein sequence ID" value="SPAC5D6.10c.1:pep"/>
    <property type="gene ID" value="SPAC5D6.10c"/>
</dbReference>
<dbReference type="GeneID" id="2542043"/>
<dbReference type="KEGG" id="spo:2542043"/>
<dbReference type="PomBase" id="SPAC5D6.10c">
    <property type="gene designation" value="mug116"/>
</dbReference>
<dbReference type="VEuPathDB" id="FungiDB:SPAC5D6.10c"/>
<dbReference type="HOGENOM" id="CLU_1886947_0_0_1"/>
<dbReference type="InParanoid" id="O14202"/>
<dbReference type="PRO" id="PR:O14202"/>
<dbReference type="Proteomes" id="UP000002485">
    <property type="component" value="Chromosome I"/>
</dbReference>
<dbReference type="GO" id="GO:0031966">
    <property type="term" value="C:mitochondrial membrane"/>
    <property type="evidence" value="ECO:0007669"/>
    <property type="project" value="UniProtKB-SubCell"/>
</dbReference>
<dbReference type="GO" id="GO:0005739">
    <property type="term" value="C:mitochondrion"/>
    <property type="evidence" value="ECO:0007005"/>
    <property type="project" value="PomBase"/>
</dbReference>
<dbReference type="GO" id="GO:0051321">
    <property type="term" value="P:meiotic cell cycle"/>
    <property type="evidence" value="ECO:0007669"/>
    <property type="project" value="UniProtKB-KW"/>
</dbReference>
<name>MU116_SCHPO</name>
<proteinExistence type="evidence at protein level"/>
<accession>O14202</accession>
<feature type="chain" id="PRO_0000116655" description="Meiotically up-regulated gene 116 protein">
    <location>
        <begin position="1"/>
        <end position="135"/>
    </location>
</feature>
<feature type="transmembrane region" description="Helical" evidence="1">
    <location>
        <begin position="20"/>
        <end position="39"/>
    </location>
</feature>
<feature type="region of interest" description="Disordered" evidence="2">
    <location>
        <begin position="81"/>
        <end position="101"/>
    </location>
</feature>
<feature type="compositionally biased region" description="Basic residues" evidence="2">
    <location>
        <begin position="86"/>
        <end position="98"/>
    </location>
</feature>